<accession>A6W828</accession>
<keyword id="KW-0028">Amino-acid biosynthesis</keyword>
<keyword id="KW-0963">Cytoplasm</keyword>
<keyword id="KW-0220">Diaminopimelate biosynthesis</keyword>
<keyword id="KW-0456">Lyase</keyword>
<keyword id="KW-0457">Lysine biosynthesis</keyword>
<keyword id="KW-1185">Reference proteome</keyword>
<keyword id="KW-0704">Schiff base</keyword>
<comment type="function">
    <text evidence="1">Catalyzes the condensation of (S)-aspartate-beta-semialdehyde [(S)-ASA] and pyruvate to 4-hydroxy-tetrahydrodipicolinate (HTPA).</text>
</comment>
<comment type="catalytic activity">
    <reaction evidence="1">
        <text>L-aspartate 4-semialdehyde + pyruvate = (2S,4S)-4-hydroxy-2,3,4,5-tetrahydrodipicolinate + H2O + H(+)</text>
        <dbReference type="Rhea" id="RHEA:34171"/>
        <dbReference type="ChEBI" id="CHEBI:15361"/>
        <dbReference type="ChEBI" id="CHEBI:15377"/>
        <dbReference type="ChEBI" id="CHEBI:15378"/>
        <dbReference type="ChEBI" id="CHEBI:67139"/>
        <dbReference type="ChEBI" id="CHEBI:537519"/>
        <dbReference type="EC" id="4.3.3.7"/>
    </reaction>
</comment>
<comment type="pathway">
    <text evidence="1">Amino-acid biosynthesis; L-lysine biosynthesis via DAP pathway; (S)-tetrahydrodipicolinate from L-aspartate: step 3/4.</text>
</comment>
<comment type="subunit">
    <text evidence="1">Homotetramer; dimer of dimers.</text>
</comment>
<comment type="subcellular location">
    <subcellularLocation>
        <location evidence="1">Cytoplasm</location>
    </subcellularLocation>
</comment>
<comment type="similarity">
    <text evidence="1">Belongs to the DapA family.</text>
</comment>
<comment type="caution">
    <text evidence="2">Was originally thought to be a dihydrodipicolinate synthase (DHDPS), catalyzing the condensation of (S)-aspartate-beta-semialdehyde [(S)-ASA] and pyruvate to dihydrodipicolinate (DHDP). However, it was shown in E.coli that the product of the enzymatic reaction is not dihydrodipicolinate but in fact (4S)-4-hydroxy-2,3,4,5-tetrahydro-(2S)-dipicolinic acid (HTPA), and that the consecutive dehydration reaction leading to DHDP is not spontaneous but catalyzed by DapB.</text>
</comment>
<evidence type="ECO:0000255" key="1">
    <source>
        <dbReference type="HAMAP-Rule" id="MF_00418"/>
    </source>
</evidence>
<evidence type="ECO:0000305" key="2"/>
<dbReference type="EC" id="4.3.3.7" evidence="1"/>
<dbReference type="EMBL" id="CP000750">
    <property type="protein sequence ID" value="ABS02967.1"/>
    <property type="molecule type" value="Genomic_DNA"/>
</dbReference>
<dbReference type="RefSeq" id="WP_011981894.1">
    <property type="nucleotide sequence ID" value="NC_009664.2"/>
</dbReference>
<dbReference type="SMR" id="A6W828"/>
<dbReference type="STRING" id="266940.Krad_1479"/>
<dbReference type="KEGG" id="kra:Krad_1479"/>
<dbReference type="eggNOG" id="COG0329">
    <property type="taxonomic scope" value="Bacteria"/>
</dbReference>
<dbReference type="HOGENOM" id="CLU_049343_7_1_11"/>
<dbReference type="OrthoDB" id="9782828at2"/>
<dbReference type="UniPathway" id="UPA00034">
    <property type="reaction ID" value="UER00017"/>
</dbReference>
<dbReference type="Proteomes" id="UP000001116">
    <property type="component" value="Chromosome"/>
</dbReference>
<dbReference type="GO" id="GO:0005829">
    <property type="term" value="C:cytosol"/>
    <property type="evidence" value="ECO:0007669"/>
    <property type="project" value="TreeGrafter"/>
</dbReference>
<dbReference type="GO" id="GO:0008840">
    <property type="term" value="F:4-hydroxy-tetrahydrodipicolinate synthase activity"/>
    <property type="evidence" value="ECO:0007669"/>
    <property type="project" value="UniProtKB-UniRule"/>
</dbReference>
<dbReference type="GO" id="GO:0019877">
    <property type="term" value="P:diaminopimelate biosynthetic process"/>
    <property type="evidence" value="ECO:0007669"/>
    <property type="project" value="UniProtKB-UniRule"/>
</dbReference>
<dbReference type="GO" id="GO:0009089">
    <property type="term" value="P:lysine biosynthetic process via diaminopimelate"/>
    <property type="evidence" value="ECO:0007669"/>
    <property type="project" value="UniProtKB-UniRule"/>
</dbReference>
<dbReference type="CDD" id="cd00950">
    <property type="entry name" value="DHDPS"/>
    <property type="match status" value="1"/>
</dbReference>
<dbReference type="Gene3D" id="3.20.20.70">
    <property type="entry name" value="Aldolase class I"/>
    <property type="match status" value="1"/>
</dbReference>
<dbReference type="HAMAP" id="MF_00418">
    <property type="entry name" value="DapA"/>
    <property type="match status" value="1"/>
</dbReference>
<dbReference type="InterPro" id="IPR013785">
    <property type="entry name" value="Aldolase_TIM"/>
</dbReference>
<dbReference type="InterPro" id="IPR005263">
    <property type="entry name" value="DapA"/>
</dbReference>
<dbReference type="InterPro" id="IPR002220">
    <property type="entry name" value="DapA-like"/>
</dbReference>
<dbReference type="InterPro" id="IPR020625">
    <property type="entry name" value="Schiff_base-form_aldolases_AS"/>
</dbReference>
<dbReference type="InterPro" id="IPR020624">
    <property type="entry name" value="Schiff_base-form_aldolases_CS"/>
</dbReference>
<dbReference type="NCBIfam" id="TIGR00674">
    <property type="entry name" value="dapA"/>
    <property type="match status" value="1"/>
</dbReference>
<dbReference type="PANTHER" id="PTHR12128:SF66">
    <property type="entry name" value="4-HYDROXY-2-OXOGLUTARATE ALDOLASE, MITOCHONDRIAL"/>
    <property type="match status" value="1"/>
</dbReference>
<dbReference type="PANTHER" id="PTHR12128">
    <property type="entry name" value="DIHYDRODIPICOLINATE SYNTHASE"/>
    <property type="match status" value="1"/>
</dbReference>
<dbReference type="Pfam" id="PF00701">
    <property type="entry name" value="DHDPS"/>
    <property type="match status" value="1"/>
</dbReference>
<dbReference type="PIRSF" id="PIRSF001365">
    <property type="entry name" value="DHDPS"/>
    <property type="match status" value="1"/>
</dbReference>
<dbReference type="PRINTS" id="PR00146">
    <property type="entry name" value="DHPICSNTHASE"/>
</dbReference>
<dbReference type="SMART" id="SM01130">
    <property type="entry name" value="DHDPS"/>
    <property type="match status" value="1"/>
</dbReference>
<dbReference type="SUPFAM" id="SSF51569">
    <property type="entry name" value="Aldolase"/>
    <property type="match status" value="1"/>
</dbReference>
<dbReference type="PROSITE" id="PS00665">
    <property type="entry name" value="DHDPS_1"/>
    <property type="match status" value="1"/>
</dbReference>
<dbReference type="PROSITE" id="PS00666">
    <property type="entry name" value="DHDPS_2"/>
    <property type="match status" value="1"/>
</dbReference>
<feature type="chain" id="PRO_0000340959" description="4-hydroxy-tetrahydrodipicolinate synthase">
    <location>
        <begin position="1"/>
        <end position="308"/>
    </location>
</feature>
<feature type="active site" description="Proton donor/acceptor" evidence="1">
    <location>
        <position position="144"/>
    </location>
</feature>
<feature type="active site" description="Schiff-base intermediate with substrate" evidence="1">
    <location>
        <position position="172"/>
    </location>
</feature>
<feature type="binding site" evidence="1">
    <location>
        <position position="56"/>
    </location>
    <ligand>
        <name>pyruvate</name>
        <dbReference type="ChEBI" id="CHEBI:15361"/>
    </ligand>
</feature>
<feature type="binding site" evidence="1">
    <location>
        <position position="212"/>
    </location>
    <ligand>
        <name>pyruvate</name>
        <dbReference type="ChEBI" id="CHEBI:15361"/>
    </ligand>
</feature>
<feature type="site" description="Part of a proton relay during catalysis" evidence="1">
    <location>
        <position position="55"/>
    </location>
</feature>
<feature type="site" description="Part of a proton relay during catalysis" evidence="1">
    <location>
        <position position="118"/>
    </location>
</feature>
<gene>
    <name evidence="1" type="primary">dapA</name>
    <name type="ordered locus">Krad_1479</name>
</gene>
<reference key="1">
    <citation type="journal article" date="2008" name="PLoS ONE">
        <title>Survival in nuclear waste, extreme resistance, and potential applications gleaned from the genome sequence of Kineococcus radiotolerans SRS30216.</title>
        <authorList>
            <person name="Bagwell C.E."/>
            <person name="Bhat S."/>
            <person name="Hawkins G.M."/>
            <person name="Smith B.W."/>
            <person name="Biswas T."/>
            <person name="Hoover T.R."/>
            <person name="Saunders E."/>
            <person name="Han C.S."/>
            <person name="Tsodikov O.V."/>
            <person name="Shimkets L.J."/>
        </authorList>
    </citation>
    <scope>NUCLEOTIDE SEQUENCE [LARGE SCALE GENOMIC DNA]</scope>
    <source>
        <strain>ATCC BAA-149 / DSM 14245 / SRS30216</strain>
    </source>
</reference>
<protein>
    <recommendedName>
        <fullName evidence="1">4-hydroxy-tetrahydrodipicolinate synthase</fullName>
        <shortName evidence="1">HTPA synthase</shortName>
        <ecNumber evidence="1">4.3.3.7</ecNumber>
    </recommendedName>
</protein>
<name>DAPA_KINRD</name>
<proteinExistence type="inferred from homology"/>
<sequence length="308" mass="31551">MPTATAAQPLRPFGTVLSAVVTPFTASGAVDLDAAAALAVHLVEHGHDGLVVSGTTGESPTTSDEEKDRLLRAVLDAVGDRVHVLAGVGTNDTAHTLELARAAEKAGAHGLLVVTPYYNKPPQAALAHHFTTVADGTGLPVMLYDIPGRSGVPIETETLVRVAEHERIVAVKDAKGDSWGTSWVLARTELAYYSGDDAVNLPLLAQGASGIVSVVSHVAGREYAAMVAAVDAGDLVTARAIHTRLLPAVRGIMTRTQGVVAVKAALELTGVLSGRAVRPPLLPATPEEVAALAADLALAGLAPAPLDA</sequence>
<organism>
    <name type="scientific">Kineococcus radiotolerans (strain ATCC BAA-149 / DSM 14245 / SRS30216)</name>
    <dbReference type="NCBI Taxonomy" id="266940"/>
    <lineage>
        <taxon>Bacteria</taxon>
        <taxon>Bacillati</taxon>
        <taxon>Actinomycetota</taxon>
        <taxon>Actinomycetes</taxon>
        <taxon>Kineosporiales</taxon>
        <taxon>Kineosporiaceae</taxon>
        <taxon>Kineococcus</taxon>
    </lineage>
</organism>